<gene>
    <name type="ordered locus">Bamb_5614</name>
</gene>
<reference key="1">
    <citation type="submission" date="2006-08" db="EMBL/GenBank/DDBJ databases">
        <title>Complete sequence of chromosome 3 of Burkholderia cepacia AMMD.</title>
        <authorList>
            <person name="Copeland A."/>
            <person name="Lucas S."/>
            <person name="Lapidus A."/>
            <person name="Barry K."/>
            <person name="Detter J.C."/>
            <person name="Glavina del Rio T."/>
            <person name="Hammon N."/>
            <person name="Israni S."/>
            <person name="Pitluck S."/>
            <person name="Bruce D."/>
            <person name="Chain P."/>
            <person name="Malfatti S."/>
            <person name="Shin M."/>
            <person name="Vergez L."/>
            <person name="Schmutz J."/>
            <person name="Larimer F."/>
            <person name="Land M."/>
            <person name="Hauser L."/>
            <person name="Kyrpides N."/>
            <person name="Kim E."/>
            <person name="Parke J."/>
            <person name="Coenye T."/>
            <person name="Konstantinidis K."/>
            <person name="Ramette A."/>
            <person name="Tiedje J."/>
            <person name="Richardson P."/>
        </authorList>
    </citation>
    <scope>NUCLEOTIDE SEQUENCE [LARGE SCALE GENOMIC DNA]</scope>
    <source>
        <strain>ATCC BAA-244 / DSM 16087 / CCUG 44356 / LMG 19182 / AMMD</strain>
    </source>
</reference>
<accession>Q0B3W2</accession>
<protein>
    <recommendedName>
        <fullName evidence="1">UPF0391 membrane protein Bamb_5614</fullName>
    </recommendedName>
</protein>
<comment type="subcellular location">
    <subcellularLocation>
        <location evidence="1">Cell membrane</location>
        <topology evidence="1">Multi-pass membrane protein</topology>
    </subcellularLocation>
</comment>
<comment type="similarity">
    <text evidence="1">Belongs to the UPF0391 family.</text>
</comment>
<sequence>MLRYAIIFFVIAIIAAVFGFGGIAAGAAEIAKILFYIFVVIFLVTLLLGVVRR</sequence>
<proteinExistence type="inferred from homology"/>
<feature type="chain" id="PRO_5000128204" description="UPF0391 membrane protein Bamb_5614">
    <location>
        <begin position="1"/>
        <end position="53"/>
    </location>
</feature>
<feature type="transmembrane region" description="Helical" evidence="1">
    <location>
        <begin position="5"/>
        <end position="25"/>
    </location>
</feature>
<feature type="transmembrane region" description="Helical" evidence="1">
    <location>
        <begin position="30"/>
        <end position="50"/>
    </location>
</feature>
<evidence type="ECO:0000255" key="1">
    <source>
        <dbReference type="HAMAP-Rule" id="MF_01361"/>
    </source>
</evidence>
<keyword id="KW-1003">Cell membrane</keyword>
<keyword id="KW-0472">Membrane</keyword>
<keyword id="KW-0812">Transmembrane</keyword>
<keyword id="KW-1133">Transmembrane helix</keyword>
<name>Y5614_BURCM</name>
<dbReference type="EMBL" id="CP000442">
    <property type="protein sequence ID" value="ABI91161.1"/>
    <property type="molecule type" value="Genomic_DNA"/>
</dbReference>
<dbReference type="RefSeq" id="WP_006498332.1">
    <property type="nucleotide sequence ID" value="NZ_CP009800.1"/>
</dbReference>
<dbReference type="SMR" id="Q0B3W2"/>
<dbReference type="KEGG" id="bam:Bamb_5614"/>
<dbReference type="PATRIC" id="fig|339670.21.peg.6540"/>
<dbReference type="eggNOG" id="COG5487">
    <property type="taxonomic scope" value="Bacteria"/>
</dbReference>
<dbReference type="Proteomes" id="UP000000662">
    <property type="component" value="Chromosome 3"/>
</dbReference>
<dbReference type="GO" id="GO:0005886">
    <property type="term" value="C:plasma membrane"/>
    <property type="evidence" value="ECO:0007669"/>
    <property type="project" value="UniProtKB-SubCell"/>
</dbReference>
<dbReference type="HAMAP" id="MF_01361">
    <property type="entry name" value="UPF0391"/>
    <property type="match status" value="1"/>
</dbReference>
<dbReference type="InterPro" id="IPR009760">
    <property type="entry name" value="DUF1328"/>
</dbReference>
<dbReference type="NCBIfam" id="NF010226">
    <property type="entry name" value="PRK13682.1-1"/>
    <property type="match status" value="1"/>
</dbReference>
<dbReference type="NCBIfam" id="NF010229">
    <property type="entry name" value="PRK13682.1-4"/>
    <property type="match status" value="1"/>
</dbReference>
<dbReference type="Pfam" id="PF07043">
    <property type="entry name" value="DUF1328"/>
    <property type="match status" value="1"/>
</dbReference>
<dbReference type="PIRSF" id="PIRSF036466">
    <property type="entry name" value="UCP036466"/>
    <property type="match status" value="1"/>
</dbReference>
<organism>
    <name type="scientific">Burkholderia ambifaria (strain ATCC BAA-244 / DSM 16087 / CCUG 44356 / LMG 19182 / AMMD)</name>
    <name type="common">Burkholderia cepacia (strain AMMD)</name>
    <dbReference type="NCBI Taxonomy" id="339670"/>
    <lineage>
        <taxon>Bacteria</taxon>
        <taxon>Pseudomonadati</taxon>
        <taxon>Pseudomonadota</taxon>
        <taxon>Betaproteobacteria</taxon>
        <taxon>Burkholderiales</taxon>
        <taxon>Burkholderiaceae</taxon>
        <taxon>Burkholderia</taxon>
        <taxon>Burkholderia cepacia complex</taxon>
    </lineage>
</organism>